<gene>
    <name type="primary">isoc1</name>
</gene>
<evidence type="ECO:0000305" key="1"/>
<protein>
    <recommendedName>
        <fullName>Isochorismatase domain-containing protein 1</fullName>
    </recommendedName>
</protein>
<comment type="similarity">
    <text evidence="1">Belongs to the isochorismatase family.</text>
</comment>
<organism>
    <name type="scientific">Salmo salar</name>
    <name type="common">Atlantic salmon</name>
    <dbReference type="NCBI Taxonomy" id="8030"/>
    <lineage>
        <taxon>Eukaryota</taxon>
        <taxon>Metazoa</taxon>
        <taxon>Chordata</taxon>
        <taxon>Craniata</taxon>
        <taxon>Vertebrata</taxon>
        <taxon>Euteleostomi</taxon>
        <taxon>Actinopterygii</taxon>
        <taxon>Neopterygii</taxon>
        <taxon>Teleostei</taxon>
        <taxon>Protacanthopterygii</taxon>
        <taxon>Salmoniformes</taxon>
        <taxon>Salmonidae</taxon>
        <taxon>Salmoninae</taxon>
        <taxon>Salmo</taxon>
    </lineage>
</organism>
<dbReference type="EMBL" id="BT044688">
    <property type="protein sequence ID" value="ACI32950.1"/>
    <property type="molecule type" value="mRNA"/>
</dbReference>
<dbReference type="RefSeq" id="XP_014000774.1">
    <property type="nucleotide sequence ID" value="XM_014145299.2"/>
</dbReference>
<dbReference type="SMR" id="B5X0W9"/>
<dbReference type="STRING" id="8030.ENSSSAP00000106832"/>
<dbReference type="PaxDb" id="8030-ENSSSAP00000106832"/>
<dbReference type="Ensembl" id="ENSSSAT00070049079">
    <property type="protein sequence ID" value="ENSSSAP00070047077"/>
    <property type="gene ID" value="ENSSSAG00070030599"/>
</dbReference>
<dbReference type="GeneID" id="106571829"/>
<dbReference type="KEGG" id="sasa:106571829"/>
<dbReference type="CTD" id="51015"/>
<dbReference type="OrthoDB" id="427352at7898"/>
<dbReference type="Proteomes" id="UP000087266">
    <property type="component" value="Chromosome ssa01"/>
</dbReference>
<dbReference type="Bgee" id="ENSSSAG00000076810">
    <property type="expression patterns" value="Expressed in pituitary gland and 23 other cell types or tissues"/>
</dbReference>
<dbReference type="CDD" id="cd01012">
    <property type="entry name" value="YcaC_related"/>
    <property type="match status" value="1"/>
</dbReference>
<dbReference type="FunFam" id="3.40.50.850:FF:000001">
    <property type="entry name" value="Isochorismatase domain-containing protein 1"/>
    <property type="match status" value="1"/>
</dbReference>
<dbReference type="Gene3D" id="3.40.50.850">
    <property type="entry name" value="Isochorismatase-like"/>
    <property type="match status" value="1"/>
</dbReference>
<dbReference type="InterPro" id="IPR000868">
    <property type="entry name" value="Isochorismatase-like_dom"/>
</dbReference>
<dbReference type="InterPro" id="IPR036380">
    <property type="entry name" value="Isochorismatase-like_sf"/>
</dbReference>
<dbReference type="InterPro" id="IPR050993">
    <property type="entry name" value="Isochorismatase_domain"/>
</dbReference>
<dbReference type="PANTHER" id="PTHR14119">
    <property type="entry name" value="HYDROLASE"/>
    <property type="match status" value="1"/>
</dbReference>
<dbReference type="PANTHER" id="PTHR14119:SF17">
    <property type="entry name" value="ISOCHORISMATASE DOMAIN-CONTAINING PROTEIN 1"/>
    <property type="match status" value="1"/>
</dbReference>
<dbReference type="Pfam" id="PF00857">
    <property type="entry name" value="Isochorismatase"/>
    <property type="match status" value="1"/>
</dbReference>
<dbReference type="SUPFAM" id="SSF52499">
    <property type="entry name" value="Isochorismatase-like hydrolases"/>
    <property type="match status" value="1"/>
</dbReference>
<reference key="1">
    <citation type="journal article" date="2010" name="BMC Genomics">
        <title>Salmo salar and Esox lucius full-length cDNA sequences reveal changes in evolutionary pressures on a post-tetraploidization genome.</title>
        <authorList>
            <person name="Leong J.S."/>
            <person name="Jantzen S.G."/>
            <person name="von Schalburg K.R."/>
            <person name="Cooper G.A."/>
            <person name="Messmer A.M."/>
            <person name="Liao N.Y."/>
            <person name="Munro S."/>
            <person name="Moore R."/>
            <person name="Holt R.A."/>
            <person name="Jones S.J."/>
            <person name="Davidson W.S."/>
            <person name="Koop B.F."/>
        </authorList>
    </citation>
    <scope>NUCLEOTIDE SEQUENCE [LARGE SCALE MRNA]</scope>
    <source>
        <tissue>Brain</tissue>
    </source>
</reference>
<feature type="chain" id="PRO_0000392202" description="Isochorismatase domain-containing protein 1">
    <location>
        <begin position="1"/>
        <end position="283"/>
    </location>
</feature>
<proteinExistence type="evidence at transcript level"/>
<sequence>MADGHSNNNHVPVLLSFSAFSRPSSVPVGSGYEVLIQKFLSLYGRQIDLHRKFMIQLYSDEWAQYIDLPKGFIISEKCKLRFVPLETDVTILGNLIPATTVFFCCDMQERFRPAIKYFGDIISVGQRLLQGARILGIPVIVSEQYPKGLGNTVQEMDLTGARLVFPKTKFSMVLPEAEAALAELPGVRSVVLFGVETHVCIQQTALDLLARGFEVHMVADSTSSRSMMDRMFALDRMARTGIIVTTSESILLQLVGDKEHPKFKEIQNIIKASAPESGLLSKV</sequence>
<name>ISOC1_SALSA</name>
<accession>B5X0W9</accession>
<keyword id="KW-1185">Reference proteome</keyword>